<keyword id="KW-0238">DNA-binding</keyword>
<keyword id="KW-0278">Fertilization</keyword>
<keyword id="KW-0539">Nucleus</keyword>
<keyword id="KW-0804">Transcription</keyword>
<keyword id="KW-0805">Transcription regulation</keyword>
<reference key="1">
    <citation type="journal article" date="1999" name="Proc. Natl. Acad. Sci. U.S.A.">
        <title>Evolution of the fungal self-fertile reproductive life style from self-sterile ancestors.</title>
        <authorList>
            <person name="Yun S.H."/>
            <person name="Berbee M.L."/>
            <person name="Yoder O.C."/>
            <person name="Turgeon B.G."/>
        </authorList>
    </citation>
    <scope>NUCLEOTIDE SEQUENCE [GENOMIC DNA]</scope>
    <source>
        <strain>81154-2</strain>
    </source>
</reference>
<feature type="chain" id="PRO_0000206011" description="Mating-type protein MAT-1">
    <location>
        <begin position="1"/>
        <end position="378"/>
    </location>
</feature>
<feature type="DNA-binding region" description="Alpha box" evidence="2">
    <location>
        <begin position="60"/>
        <end position="117"/>
    </location>
</feature>
<feature type="region of interest" description="Disordered" evidence="3">
    <location>
        <begin position="235"/>
        <end position="256"/>
    </location>
</feature>
<feature type="compositionally biased region" description="Basic residues" evidence="3">
    <location>
        <begin position="244"/>
        <end position="253"/>
    </location>
</feature>
<protein>
    <recommendedName>
        <fullName>Mating-type protein MAT-1</fullName>
    </recommendedName>
</protein>
<dbReference type="EMBL" id="AF129746">
    <property type="protein sequence ID" value="AAD33449.1"/>
    <property type="molecule type" value="Genomic_DNA"/>
</dbReference>
<dbReference type="GO" id="GO:0005634">
    <property type="term" value="C:nucleus"/>
    <property type="evidence" value="ECO:0007669"/>
    <property type="project" value="UniProtKB-SubCell"/>
</dbReference>
<dbReference type="GO" id="GO:0008301">
    <property type="term" value="F:DNA binding, bending"/>
    <property type="evidence" value="ECO:0007669"/>
    <property type="project" value="InterPro"/>
</dbReference>
<dbReference type="GO" id="GO:0045895">
    <property type="term" value="P:positive regulation of mating-type specific transcription, DNA-templated"/>
    <property type="evidence" value="ECO:0007669"/>
    <property type="project" value="InterPro"/>
</dbReference>
<dbReference type="GO" id="GO:0007338">
    <property type="term" value="P:single fertilization"/>
    <property type="evidence" value="ECO:0007669"/>
    <property type="project" value="UniProtKB-KW"/>
</dbReference>
<dbReference type="InterPro" id="IPR006856">
    <property type="entry name" value="MATalpha_HMGbox"/>
</dbReference>
<dbReference type="Pfam" id="PF04769">
    <property type="entry name" value="MATalpha_HMGbox"/>
    <property type="match status" value="1"/>
</dbReference>
<dbReference type="PROSITE" id="PS51325">
    <property type="entry name" value="ALPHA_BOX"/>
    <property type="match status" value="1"/>
</dbReference>
<name>MAT1_COCEL</name>
<organism>
    <name type="scientific">Cochliobolus ellisii</name>
    <name type="common">Curvularia ellisii</name>
    <dbReference type="NCBI Taxonomy" id="91237"/>
    <lineage>
        <taxon>Eukaryota</taxon>
        <taxon>Fungi</taxon>
        <taxon>Dikarya</taxon>
        <taxon>Ascomycota</taxon>
        <taxon>Pezizomycotina</taxon>
        <taxon>Dothideomycetes</taxon>
        <taxon>Pleosporomycetidae</taxon>
        <taxon>Pleosporales</taxon>
        <taxon>Pleosporineae</taxon>
        <taxon>Pleosporaceae</taxon>
        <taxon>Curvularia</taxon>
    </lineage>
</organism>
<comment type="function">
    <text evidence="1">Mating type proteins are sequence specific DNA-binding proteins that act as master switches in fungal differentiation by controlling gene expression in a cell type-specific fashion. Transcriptional activator that induces the transcription of alpha-specific genes.</text>
</comment>
<comment type="subcellular location">
    <subcellularLocation>
        <location evidence="2">Nucleus</location>
    </subcellularLocation>
</comment>
<comment type="similarity">
    <text evidence="2">Belongs to the MATALPHA1 family.</text>
</comment>
<sequence length="378" mass="42084">MDSARAPTEDEIAKFLATRTSSQMLQLMRCIKQPAAQFAFTAKLLTITPVKNTPPTVPEKAKKALNAFVGFRCYYIAIPAFKPWPMKKLSNLISLLWEGDPNKSLWSLMAKAWSNIRDQVGKDQAPLDEFFGIICPHLELPDPAYYLDLHGWSLGVNQEGDPTLLRIIDSKPASIGIGHINLALSVEDIITFVQKAGFAPTYTPDANDTSPTFLGQSLSSTFEVNHPANSIPAASQVDQARVAARNRRRAKRQSARELEFQEKLENDLEFKEKINREMDLVLERTPPAGPDPLPDFDFTPFYEGVNNLICEHMAMEQSNAGYPEGAHLFNDFGIDSSKAYLGMDNFATDMPDLIDYDAFRLGANEDVALPVFDDIAHA</sequence>
<evidence type="ECO:0000250" key="1">
    <source>
        <dbReference type="UniProtKB" id="P0CY06"/>
    </source>
</evidence>
<evidence type="ECO:0000255" key="2">
    <source>
        <dbReference type="PROSITE-ProRule" id="PRU00655"/>
    </source>
</evidence>
<evidence type="ECO:0000256" key="3">
    <source>
        <dbReference type="SAM" id="MobiDB-lite"/>
    </source>
</evidence>
<proteinExistence type="inferred from homology"/>
<accession>Q9Y8C7</accession>
<gene>
    <name type="primary">MAT1</name>
</gene>